<gene>
    <name evidence="1" type="primary">atpB</name>
</gene>
<sequence>MRTNSTTSGPGVPTLEKKNLGRIAQIIGPVLDVAFPPGKMPNIYNALIVTGQDTTGQPINVTCEVQQLLGNNRVRAVAMSATDGLMRGMEVIDTGAPLSVPVGGATLGRIFNVLGEPVDNLGPVDTRTTSPIHRSAPAFTQLDTKLSIFETGIKVVDLLAPYRRGGKIGLFGGAGVGKTVLIMELINNIAKAHGGVSVFGGVGERTREGNDLYMEMKESGVINEQNIAESKVALVYGQMNEPPGARMRVGLTALTMAEYFRDVNEQDVLLFIDNILRFVQAGSEVSALLGRMPSAVGYQPTLSTEMGSLQERITSTKEGSITSIQAVYVPADDLTDPAPATTFAHLDATTVLSRGLAAKGIYPAVDPLDSTSTMLQPRIVGEEHYEIAQRVKQTLQRYKELQDIIAILGLDELSEEDRLTVARARKIERFLSQPFFVAEVFTGSPGKYVGLAETIRGFQLIFSGELDGLPEQAFYLVGNIDEVTAKAMNLEMESKLKK</sequence>
<name>ATPB_BETVU</name>
<comment type="function">
    <text evidence="1">Produces ATP from ADP in the presence of a proton gradient across the membrane. The catalytic sites are hosted primarily by the beta subunits.</text>
</comment>
<comment type="catalytic activity">
    <reaction evidence="1">
        <text>ATP + H2O + 4 H(+)(in) = ADP + phosphate + 5 H(+)(out)</text>
        <dbReference type="Rhea" id="RHEA:57720"/>
        <dbReference type="ChEBI" id="CHEBI:15377"/>
        <dbReference type="ChEBI" id="CHEBI:15378"/>
        <dbReference type="ChEBI" id="CHEBI:30616"/>
        <dbReference type="ChEBI" id="CHEBI:43474"/>
        <dbReference type="ChEBI" id="CHEBI:456216"/>
        <dbReference type="EC" id="7.1.2.2"/>
    </reaction>
</comment>
<comment type="subunit">
    <text evidence="1">F-type ATPases have 2 components, CF(1) - the catalytic core - and CF(0) - the membrane proton channel. CF(1) has five subunits: alpha(3), beta(3), gamma(1), delta(1), epsilon(1). CF(0) has four main subunits: a(1), b(1), b'(1) and c(9-12).</text>
</comment>
<comment type="subcellular location">
    <subcellularLocation>
        <location evidence="1">Plastid</location>
        <location evidence="1">Chloroplast thylakoid membrane</location>
        <topology evidence="1">Peripheral membrane protein</topology>
    </subcellularLocation>
</comment>
<comment type="similarity">
    <text evidence="1">Belongs to the ATPase alpha/beta chains family.</text>
</comment>
<accession>Q4PLI6</accession>
<protein>
    <recommendedName>
        <fullName evidence="1">ATP synthase subunit beta, chloroplastic</fullName>
        <ecNumber evidence="1">7.1.2.2</ecNumber>
    </recommendedName>
    <alternativeName>
        <fullName evidence="1">ATP synthase F1 sector subunit beta</fullName>
    </alternativeName>
    <alternativeName>
        <fullName evidence="1">F-ATPase subunit beta</fullName>
    </alternativeName>
</protein>
<keyword id="KW-0066">ATP synthesis</keyword>
<keyword id="KW-0067">ATP-binding</keyword>
<keyword id="KW-0139">CF(1)</keyword>
<keyword id="KW-0150">Chloroplast</keyword>
<keyword id="KW-0375">Hydrogen ion transport</keyword>
<keyword id="KW-0406">Ion transport</keyword>
<keyword id="KW-0472">Membrane</keyword>
<keyword id="KW-0547">Nucleotide-binding</keyword>
<keyword id="KW-0934">Plastid</keyword>
<keyword id="KW-0793">Thylakoid</keyword>
<keyword id="KW-1278">Translocase</keyword>
<keyword id="KW-0813">Transport</keyword>
<organism>
    <name type="scientific">Beta vulgaris</name>
    <name type="common">Sugar beet</name>
    <dbReference type="NCBI Taxonomy" id="161934"/>
    <lineage>
        <taxon>Eukaryota</taxon>
        <taxon>Viridiplantae</taxon>
        <taxon>Streptophyta</taxon>
        <taxon>Embryophyta</taxon>
        <taxon>Tracheophyta</taxon>
        <taxon>Spermatophyta</taxon>
        <taxon>Magnoliopsida</taxon>
        <taxon>eudicotyledons</taxon>
        <taxon>Gunneridae</taxon>
        <taxon>Pentapetalae</taxon>
        <taxon>Caryophyllales</taxon>
        <taxon>Chenopodiaceae</taxon>
        <taxon>Betoideae</taxon>
        <taxon>Beta</taxon>
    </lineage>
</organism>
<proteinExistence type="inferred from homology"/>
<geneLocation type="chloroplast"/>
<evidence type="ECO:0000255" key="1">
    <source>
        <dbReference type="HAMAP-Rule" id="MF_01347"/>
    </source>
</evidence>
<feature type="chain" id="PRO_0000254447" description="ATP synthase subunit beta, chloroplastic">
    <location>
        <begin position="1"/>
        <end position="498"/>
    </location>
</feature>
<feature type="binding site" evidence="1">
    <location>
        <begin position="172"/>
        <end position="179"/>
    </location>
    <ligand>
        <name>ATP</name>
        <dbReference type="ChEBI" id="CHEBI:30616"/>
    </ligand>
</feature>
<dbReference type="EC" id="7.1.2.2" evidence="1"/>
<dbReference type="EMBL" id="DQ067451">
    <property type="protein sequence ID" value="AAY68361.1"/>
    <property type="molecule type" value="Genomic_DNA"/>
</dbReference>
<dbReference type="SMR" id="Q4PLI6"/>
<dbReference type="GO" id="GO:0009535">
    <property type="term" value="C:chloroplast thylakoid membrane"/>
    <property type="evidence" value="ECO:0007669"/>
    <property type="project" value="UniProtKB-SubCell"/>
</dbReference>
<dbReference type="GO" id="GO:0005739">
    <property type="term" value="C:mitochondrion"/>
    <property type="evidence" value="ECO:0007669"/>
    <property type="project" value="GOC"/>
</dbReference>
<dbReference type="GO" id="GO:0045259">
    <property type="term" value="C:proton-transporting ATP synthase complex"/>
    <property type="evidence" value="ECO:0007669"/>
    <property type="project" value="UniProtKB-KW"/>
</dbReference>
<dbReference type="GO" id="GO:0005524">
    <property type="term" value="F:ATP binding"/>
    <property type="evidence" value="ECO:0007669"/>
    <property type="project" value="UniProtKB-UniRule"/>
</dbReference>
<dbReference type="GO" id="GO:0016887">
    <property type="term" value="F:ATP hydrolysis activity"/>
    <property type="evidence" value="ECO:0007669"/>
    <property type="project" value="InterPro"/>
</dbReference>
<dbReference type="GO" id="GO:0046933">
    <property type="term" value="F:proton-transporting ATP synthase activity, rotational mechanism"/>
    <property type="evidence" value="ECO:0007669"/>
    <property type="project" value="UniProtKB-UniRule"/>
</dbReference>
<dbReference type="GO" id="GO:0042776">
    <property type="term" value="P:proton motive force-driven mitochondrial ATP synthesis"/>
    <property type="evidence" value="ECO:0007669"/>
    <property type="project" value="TreeGrafter"/>
</dbReference>
<dbReference type="CDD" id="cd18110">
    <property type="entry name" value="ATP-synt_F1_beta_C"/>
    <property type="match status" value="1"/>
</dbReference>
<dbReference type="CDD" id="cd18115">
    <property type="entry name" value="ATP-synt_F1_beta_N"/>
    <property type="match status" value="1"/>
</dbReference>
<dbReference type="CDD" id="cd01133">
    <property type="entry name" value="F1-ATPase_beta_CD"/>
    <property type="match status" value="1"/>
</dbReference>
<dbReference type="FunFam" id="1.10.1140.10:FF:000001">
    <property type="entry name" value="ATP synthase subunit beta"/>
    <property type="match status" value="1"/>
</dbReference>
<dbReference type="FunFam" id="3.40.50.300:FF:000004">
    <property type="entry name" value="ATP synthase subunit beta"/>
    <property type="match status" value="1"/>
</dbReference>
<dbReference type="FunFam" id="2.40.10.170:FF:000002">
    <property type="entry name" value="ATP synthase subunit beta, chloroplastic"/>
    <property type="match status" value="1"/>
</dbReference>
<dbReference type="Gene3D" id="2.40.10.170">
    <property type="match status" value="1"/>
</dbReference>
<dbReference type="Gene3D" id="1.10.1140.10">
    <property type="entry name" value="Bovine Mitochondrial F1-atpase, Atp Synthase Beta Chain, Chain D, domain 3"/>
    <property type="match status" value="1"/>
</dbReference>
<dbReference type="Gene3D" id="3.40.50.300">
    <property type="entry name" value="P-loop containing nucleotide triphosphate hydrolases"/>
    <property type="match status" value="1"/>
</dbReference>
<dbReference type="HAMAP" id="MF_01347">
    <property type="entry name" value="ATP_synth_beta_bact"/>
    <property type="match status" value="1"/>
</dbReference>
<dbReference type="InterPro" id="IPR003593">
    <property type="entry name" value="AAA+_ATPase"/>
</dbReference>
<dbReference type="InterPro" id="IPR055190">
    <property type="entry name" value="ATP-synt_VA_C"/>
</dbReference>
<dbReference type="InterPro" id="IPR005722">
    <property type="entry name" value="ATP_synth_F1_bsu"/>
</dbReference>
<dbReference type="InterPro" id="IPR020003">
    <property type="entry name" value="ATPase_a/bsu_AS"/>
</dbReference>
<dbReference type="InterPro" id="IPR050053">
    <property type="entry name" value="ATPase_alpha/beta_chains"/>
</dbReference>
<dbReference type="InterPro" id="IPR004100">
    <property type="entry name" value="ATPase_F1/V1/A1_a/bsu_N"/>
</dbReference>
<dbReference type="InterPro" id="IPR036121">
    <property type="entry name" value="ATPase_F1/V1/A1_a/bsu_N_sf"/>
</dbReference>
<dbReference type="InterPro" id="IPR000194">
    <property type="entry name" value="ATPase_F1/V1/A1_a/bsu_nucl-bd"/>
</dbReference>
<dbReference type="InterPro" id="IPR024034">
    <property type="entry name" value="ATPase_F1/V1_b/a_C"/>
</dbReference>
<dbReference type="InterPro" id="IPR027417">
    <property type="entry name" value="P-loop_NTPase"/>
</dbReference>
<dbReference type="NCBIfam" id="TIGR01039">
    <property type="entry name" value="atpD"/>
    <property type="match status" value="1"/>
</dbReference>
<dbReference type="PANTHER" id="PTHR15184">
    <property type="entry name" value="ATP SYNTHASE"/>
    <property type="match status" value="1"/>
</dbReference>
<dbReference type="PANTHER" id="PTHR15184:SF71">
    <property type="entry name" value="ATP SYNTHASE SUBUNIT BETA, MITOCHONDRIAL"/>
    <property type="match status" value="1"/>
</dbReference>
<dbReference type="Pfam" id="PF00006">
    <property type="entry name" value="ATP-synt_ab"/>
    <property type="match status" value="1"/>
</dbReference>
<dbReference type="Pfam" id="PF02874">
    <property type="entry name" value="ATP-synt_ab_N"/>
    <property type="match status" value="1"/>
</dbReference>
<dbReference type="Pfam" id="PF22919">
    <property type="entry name" value="ATP-synt_VA_C"/>
    <property type="match status" value="1"/>
</dbReference>
<dbReference type="SMART" id="SM00382">
    <property type="entry name" value="AAA"/>
    <property type="match status" value="1"/>
</dbReference>
<dbReference type="SUPFAM" id="SSF47917">
    <property type="entry name" value="C-terminal domain of alpha and beta subunits of F1 ATP synthase"/>
    <property type="match status" value="1"/>
</dbReference>
<dbReference type="SUPFAM" id="SSF50615">
    <property type="entry name" value="N-terminal domain of alpha and beta subunits of F1 ATP synthase"/>
    <property type="match status" value="1"/>
</dbReference>
<dbReference type="SUPFAM" id="SSF52540">
    <property type="entry name" value="P-loop containing nucleoside triphosphate hydrolases"/>
    <property type="match status" value="1"/>
</dbReference>
<dbReference type="PROSITE" id="PS00152">
    <property type="entry name" value="ATPASE_ALPHA_BETA"/>
    <property type="match status" value="1"/>
</dbReference>
<reference key="1">
    <citation type="submission" date="2005-05" db="EMBL/GenBank/DDBJ databases">
        <title>Cloning and sequencing of chloroplast ATP synthase beta subunit gene (atpB) and its promoter region from sugar beet.</title>
        <authorList>
            <person name="Cui J."/>
        </authorList>
    </citation>
    <scope>NUCLEOTIDE SEQUENCE [GENOMIC DNA]</scope>
</reference>